<comment type="function">
    <text evidence="2">May be involved in the regulation of export from the endoplasmic reticulum of a subset of glycoproteins. May function as a regulator of ERGIC-53 (By similarity).</text>
</comment>
<comment type="subcellular location">
    <subcellularLocation>
        <location evidence="1">Endoplasmic reticulum membrane</location>
        <topology evidence="1">Single-pass type I membrane protein</topology>
    </subcellularLocation>
    <subcellularLocation>
        <location evidence="1">Golgi apparatus membrane</location>
        <topology evidence="1">Single-pass type I membrane protein</topology>
    </subcellularLocation>
    <text evidence="1">Predominantly found in the endoplasmic reticulum. Partly found in the Golgi.</text>
</comment>
<gene>
    <name type="primary">LMAN2L</name>
    <name type="synonym">VIPL</name>
</gene>
<dbReference type="EMBL" id="CR858321">
    <property type="protein sequence ID" value="CAH90557.1"/>
    <property type="molecule type" value="Transcribed_RNA"/>
</dbReference>
<dbReference type="SMR" id="Q5RCF0"/>
<dbReference type="FunCoup" id="Q5RCF0">
    <property type="interactions" value="1856"/>
</dbReference>
<dbReference type="STRING" id="9601.ENSPPYP00000013465"/>
<dbReference type="GlyCosmos" id="Q5RCF0">
    <property type="glycosylation" value="1 site, No reported glycans"/>
</dbReference>
<dbReference type="eggNOG" id="KOG3839">
    <property type="taxonomic scope" value="Eukaryota"/>
</dbReference>
<dbReference type="InParanoid" id="Q5RCF0"/>
<dbReference type="Proteomes" id="UP000001595">
    <property type="component" value="Unplaced"/>
</dbReference>
<dbReference type="GO" id="GO:0030134">
    <property type="term" value="C:COPII-coated ER to Golgi transport vesicle"/>
    <property type="evidence" value="ECO:0007669"/>
    <property type="project" value="TreeGrafter"/>
</dbReference>
<dbReference type="GO" id="GO:0005789">
    <property type="term" value="C:endoplasmic reticulum membrane"/>
    <property type="evidence" value="ECO:0007669"/>
    <property type="project" value="UniProtKB-SubCell"/>
</dbReference>
<dbReference type="GO" id="GO:0005793">
    <property type="term" value="C:endoplasmic reticulum-Golgi intermediate compartment"/>
    <property type="evidence" value="ECO:0007669"/>
    <property type="project" value="TreeGrafter"/>
</dbReference>
<dbReference type="GO" id="GO:0000139">
    <property type="term" value="C:Golgi membrane"/>
    <property type="evidence" value="ECO:0007669"/>
    <property type="project" value="UniProtKB-SubCell"/>
</dbReference>
<dbReference type="GO" id="GO:0005537">
    <property type="term" value="F:D-mannose binding"/>
    <property type="evidence" value="ECO:0007669"/>
    <property type="project" value="TreeGrafter"/>
</dbReference>
<dbReference type="GO" id="GO:0046872">
    <property type="term" value="F:metal ion binding"/>
    <property type="evidence" value="ECO:0007669"/>
    <property type="project" value="UniProtKB-KW"/>
</dbReference>
<dbReference type="GO" id="GO:0006888">
    <property type="term" value="P:endoplasmic reticulum to Golgi vesicle-mediated transport"/>
    <property type="evidence" value="ECO:0007669"/>
    <property type="project" value="TreeGrafter"/>
</dbReference>
<dbReference type="FunFam" id="2.60.120.200:FF:000017">
    <property type="entry name" value="Vesicular integral-membrane protein VIP36"/>
    <property type="match status" value="1"/>
</dbReference>
<dbReference type="Gene3D" id="2.60.120.200">
    <property type="match status" value="1"/>
</dbReference>
<dbReference type="InterPro" id="IPR013320">
    <property type="entry name" value="ConA-like_dom_sf"/>
</dbReference>
<dbReference type="InterPro" id="IPR051136">
    <property type="entry name" value="Intracellular_Lectin-GPT"/>
</dbReference>
<dbReference type="InterPro" id="IPR005052">
    <property type="entry name" value="Lectin_leg"/>
</dbReference>
<dbReference type="PANTHER" id="PTHR12223">
    <property type="entry name" value="VESICULAR MANNOSE-BINDING LECTIN"/>
    <property type="match status" value="1"/>
</dbReference>
<dbReference type="PANTHER" id="PTHR12223:SF20">
    <property type="entry name" value="VIP36-LIKE PROTEIN"/>
    <property type="match status" value="1"/>
</dbReference>
<dbReference type="Pfam" id="PF03388">
    <property type="entry name" value="Lectin_leg-like"/>
    <property type="match status" value="1"/>
</dbReference>
<dbReference type="SUPFAM" id="SSF49899">
    <property type="entry name" value="Concanavalin A-like lectins/glucanases"/>
    <property type="match status" value="1"/>
</dbReference>
<dbReference type="PROSITE" id="PS51328">
    <property type="entry name" value="L_LECTIN_LIKE"/>
    <property type="match status" value="1"/>
</dbReference>
<reference key="1">
    <citation type="submission" date="2004-11" db="EMBL/GenBank/DDBJ databases">
        <authorList>
            <consortium name="The German cDNA consortium"/>
        </authorList>
    </citation>
    <scope>NUCLEOTIDE SEQUENCE [LARGE SCALE MRNA]</scope>
    <source>
        <tissue>Heart</tissue>
    </source>
</reference>
<name>LMA2L_PONAB</name>
<keyword id="KW-1015">Disulfide bond</keyword>
<keyword id="KW-0256">Endoplasmic reticulum</keyword>
<keyword id="KW-0325">Glycoprotein</keyword>
<keyword id="KW-0333">Golgi apparatus</keyword>
<keyword id="KW-0430">Lectin</keyword>
<keyword id="KW-0472">Membrane</keyword>
<keyword id="KW-0479">Metal-binding</keyword>
<keyword id="KW-1185">Reference proteome</keyword>
<keyword id="KW-0732">Signal</keyword>
<keyword id="KW-0812">Transmembrane</keyword>
<keyword id="KW-1133">Transmembrane helix</keyword>
<feature type="signal peptide" evidence="3">
    <location>
        <begin position="1"/>
        <end position="38"/>
    </location>
</feature>
<feature type="chain" id="PRO_0000232652" description="VIP36-like protein">
    <location>
        <begin position="39"/>
        <end position="348"/>
    </location>
</feature>
<feature type="topological domain" description="Lumenal" evidence="3">
    <location>
        <begin position="39"/>
        <end position="313"/>
    </location>
</feature>
<feature type="transmembrane region" description="Helical" evidence="3">
    <location>
        <begin position="314"/>
        <end position="334"/>
    </location>
</feature>
<feature type="topological domain" description="Cytoplasmic" evidence="3">
    <location>
        <begin position="335"/>
        <end position="348"/>
    </location>
</feature>
<feature type="domain" description="L-type lectin-like" evidence="4">
    <location>
        <begin position="49"/>
        <end position="274"/>
    </location>
</feature>
<feature type="short sequence motif" description="Endoplasmic reticulum retention signal" evidence="1">
    <location>
        <begin position="344"/>
        <end position="346"/>
    </location>
</feature>
<feature type="binding site" evidence="4">
    <location>
        <position position="93"/>
    </location>
    <ligand>
        <name>a carbohydrate</name>
        <dbReference type="ChEBI" id="CHEBI:16646"/>
    </ligand>
</feature>
<feature type="binding site" evidence="4">
    <location>
        <position position="128"/>
    </location>
    <ligand>
        <name>a carbohydrate</name>
        <dbReference type="ChEBI" id="CHEBI:16646"/>
    </ligand>
</feature>
<feature type="binding site" evidence="4">
    <location>
        <position position="159"/>
    </location>
    <ligand>
        <name>Ca(2+)</name>
        <dbReference type="ChEBI" id="CHEBI:29108"/>
    </ligand>
</feature>
<feature type="binding site" evidence="4">
    <location>
        <begin position="161"/>
        <end position="163"/>
    </location>
    <ligand>
        <name>a carbohydrate</name>
        <dbReference type="ChEBI" id="CHEBI:16646"/>
    </ligand>
</feature>
<feature type="binding site" evidence="4">
    <location>
        <position position="161"/>
    </location>
    <ligand>
        <name>Ca(2+)</name>
        <dbReference type="ChEBI" id="CHEBI:29108"/>
    </ligand>
</feature>
<feature type="binding site" evidence="4">
    <location>
        <position position="163"/>
    </location>
    <ligand>
        <name>Ca(2+)</name>
        <dbReference type="ChEBI" id="CHEBI:29108"/>
    </ligand>
</feature>
<feature type="binding site" evidence="4">
    <location>
        <position position="188"/>
    </location>
    <ligand>
        <name>a carbohydrate</name>
        <dbReference type="ChEBI" id="CHEBI:16646"/>
    </ligand>
</feature>
<feature type="binding site" evidence="4">
    <location>
        <position position="191"/>
    </location>
    <ligand>
        <name>Ca(2+)</name>
        <dbReference type="ChEBI" id="CHEBI:29108"/>
    </ligand>
</feature>
<feature type="binding site" evidence="4">
    <location>
        <begin position="258"/>
        <end position="260"/>
    </location>
    <ligand>
        <name>a carbohydrate</name>
        <dbReference type="ChEBI" id="CHEBI:16646"/>
    </ligand>
</feature>
<feature type="glycosylation site" description="N-linked (GlcNAc...) asparagine" evidence="3">
    <location>
        <position position="181"/>
    </location>
</feature>
<feature type="disulfide bond" evidence="4">
    <location>
        <begin position="200"/>
        <end position="237"/>
    </location>
</feature>
<protein>
    <recommendedName>
        <fullName>VIP36-like protein</fullName>
    </recommendedName>
    <alternativeName>
        <fullName>Lectin mannose-binding 2-like</fullName>
        <shortName>LMAN2-like protein</shortName>
    </alternativeName>
</protein>
<evidence type="ECO:0000250" key="1"/>
<evidence type="ECO:0000250" key="2">
    <source>
        <dbReference type="UniProtKB" id="Q9H0V9"/>
    </source>
</evidence>
<evidence type="ECO:0000255" key="3"/>
<evidence type="ECO:0000255" key="4">
    <source>
        <dbReference type="PROSITE-ProRule" id="PRU00658"/>
    </source>
</evidence>
<organism>
    <name type="scientific">Pongo abelii</name>
    <name type="common">Sumatran orangutan</name>
    <name type="synonym">Pongo pygmaeus abelii</name>
    <dbReference type="NCBI Taxonomy" id="9601"/>
    <lineage>
        <taxon>Eukaryota</taxon>
        <taxon>Metazoa</taxon>
        <taxon>Chordata</taxon>
        <taxon>Craniata</taxon>
        <taxon>Vertebrata</taxon>
        <taxon>Euteleostomi</taxon>
        <taxon>Mammalia</taxon>
        <taxon>Eutheria</taxon>
        <taxon>Euarchontoglires</taxon>
        <taxon>Primates</taxon>
        <taxon>Haplorrhini</taxon>
        <taxon>Catarrhini</taxon>
        <taxon>Hominidae</taxon>
        <taxon>Pongo</taxon>
    </lineage>
</organism>
<sequence>MAATLGPLGSWQQWRRCLLARDGSRMLLLLLLLGSGQGPQQVGAGQTFEYLKREHSLSKPYQGVGTGSSSLWNLMGNAMVMTQYIRLTPDMQSKQGALWNRVPCFLRDWELQVHFKIHGQGKKNLHGDGLAIWYTKDRMQPGPVFGNMDKFVGLGVFVDTYPNEEKQQERVFPYISAMVNNGSLSYDHERDGRPTELGGCTAIVRNLHYDTFLVIRYVKRHLTIMMDIDGKHEWRDCIEVPGVRLPRGYYFGTSSITGDLSDNHDVISLKLFELTVERTPEEEKLHRDVFLPSVDNMKLPEVTAPLPPLSGLALFHIVFFSLVIFVFAIVIGIILYNKWQEQSRKRFY</sequence>
<accession>Q5RCF0</accession>
<proteinExistence type="inferred from homology"/>